<evidence type="ECO:0000255" key="1">
    <source>
        <dbReference type="HAMAP-Rule" id="MF_01049"/>
    </source>
</evidence>
<evidence type="ECO:0000269" key="2">
    <source>
    </source>
</evidence>
<evidence type="ECO:0000269" key="3">
    <source>
    </source>
</evidence>
<evidence type="ECO:0000269" key="4">
    <source>
    </source>
</evidence>
<evidence type="ECO:0000269" key="5">
    <source>
    </source>
</evidence>
<evidence type="ECO:0000269" key="6">
    <source>
    </source>
</evidence>
<evidence type="ECO:0000269" key="7">
    <source>
    </source>
</evidence>
<evidence type="ECO:0000269" key="8">
    <source>
    </source>
</evidence>
<evidence type="ECO:0000303" key="9">
    <source>
    </source>
</evidence>
<evidence type="ECO:0000303" key="10">
    <source>
    </source>
</evidence>
<evidence type="ECO:0000305" key="11"/>
<evidence type="ECO:0000305" key="12">
    <source>
    </source>
</evidence>
<evidence type="ECO:0000305" key="13">
    <source>
    </source>
</evidence>
<evidence type="ECO:0007744" key="14">
    <source>
        <dbReference type="PDB" id="2WSX"/>
    </source>
</evidence>
<evidence type="ECO:0007744" key="15">
    <source>
        <dbReference type="PDB" id="3HFX"/>
    </source>
</evidence>
<evidence type="ECO:0007829" key="16">
    <source>
        <dbReference type="PDB" id="2WSX"/>
    </source>
</evidence>
<evidence type="ECO:0007829" key="17">
    <source>
        <dbReference type="PDB" id="3HFX"/>
    </source>
</evidence>
<accession>P31553</accession>
<accession>P75624</accession>
<accession>Q6IU45</accession>
<sequence>MKNEKRKTGIEPKVFFPPLIIVGILCWLTVRDLDAANVVINAVFSYVTNVWGWAFEWYMVVMLFGWFWLVFGPYAKKRLGNEPPEFSTASWIFMMFASCTSAAVLFWGSIEIYYYISTPPFGLEPNSTGAKELGLAYSLFHWGPLPWATYSFLSVAFAYFFFVRKMEVIRPSSTLVPLVGEKHAKGLFGTIVDNFYLVALIFAMGTSLGLATPLVTECMQWLFGIPHTLQLDAIIITCWIILNAICVACGLQKGVRIASDVRSYLSFLMLGWVFIVSGASFIMNYFTDSVGMLLMYLPRMLFYTDPIAKGGFPQGWTVFYWAWWVIYAIQMSIFLARISRGRTVRELCFGMVLGLTASTWILWTVLGSNTLLLIDKNIINIPNLIEQYGVARAIIETWAALPLSTATMWGFFILCFIATVTLVNACSYTLAMSTCREVRDGEEPPLLVRIGWSILVGIIGIVLLALGGLKPIQTAIIAGGCPLFFVNIMVTLSFIKDAKQNWKD</sequence>
<comment type="function">
    <text evidence="2 6 8">Catalyzes the exchange of L-carnitine for gamma-butyrobetaine (PubMed:12163501, PubMed:20829798, PubMed:30846799). Can also transport D-carnitine and, with lower efficiency, acetyl-L-carnitine and glycine betaine (PubMed:12163501).</text>
</comment>
<comment type="catalytic activity">
    <reaction evidence="1 2 6 8">
        <text>4-(trimethylamino)butanoate(in) + (R)-carnitine(out) = 4-(trimethylamino)butanoate(out) + (R)-carnitine(in)</text>
        <dbReference type="Rhea" id="RHEA:29427"/>
        <dbReference type="ChEBI" id="CHEBI:16244"/>
        <dbReference type="ChEBI" id="CHEBI:16347"/>
    </reaction>
</comment>
<comment type="activity regulation">
    <text evidence="2">Inhibited by the sulfhydryl reagent N-ethylmaleimide, but not by the ionophore carbonyl cyanide m-chlorophenylhydrazone (CCCP).</text>
</comment>
<comment type="biophysicochemical properties">
    <kinetics>
        <KM evidence="2">105 uM for L-carnitine</KM>
        <KM evidence="6">81.1 uM for L-carnitine</KM>
        <KM evidence="8">45.3 uM for L-carnitine</KM>
        <Vmax evidence="2">6058.0 nmol/min/mg enzyme</Vmax>
        <Vmax evidence="6">4921.0 nmol/min/mg enzyme</Vmax>
        <Vmax evidence="8">2.13 umol/min/mg enzyme</Vmax>
        <text evidence="6">kcat is 279 min(-1) with L-carnitine as substrate.</text>
    </kinetics>
</comment>
<comment type="pathway">
    <text evidence="1 12 13">Amine and polyamine metabolism; carnitine metabolism.</text>
</comment>
<comment type="subunit">
    <text evidence="4 5 6 8">Homotrimer (PubMed:16365043, PubMed:20357772, PubMed:20829798, PubMed:30846799). The monomer is stable in the membrane and is fully functional, but physical contact between the protomers of a trimer may facilitate conformational alterations associated with substrate binding (PubMed:30846799).</text>
</comment>
<comment type="subcellular location">
    <subcellularLocation>
        <location evidence="1 3 5 6">Cell inner membrane</location>
        <topology evidence="1 5 6">Multi-pass membrane protein</topology>
    </subcellularLocation>
</comment>
<comment type="domain">
    <text evidence="5 6 7">Contains two carnitine binding sites, a primary binding site at the center of the protein and a secondary binding site at the bottom of the intracellular vestibule (PubMed:20357772). Contains two gamma-butyrobetaine binding sites, one in the central transport site, the other in an extracellular binding pocket (PubMed:20829798). Binding of both butyrobetaine molecules is cooperative, indicating that the extracellular site is regulatory (PubMed:20829798). The occupied regulatory site may increase the binding affinity of the transport site and initiates substrate translocation (PubMed:20829798). Both L-carnitine and gamma-butyrobetaine are able to dissociate completely from their primary site into the cytoplasm (PubMed:22843728). Substrate molecules initially located at the secondary sites dissociate even faster into the extra- or intracellular regions (PubMed:22843728).</text>
</comment>
<comment type="disruption phenotype">
    <text evidence="2">Essential, it cannot be deleted.</text>
</comment>
<comment type="similarity">
    <text evidence="1 11">Belongs to the BCCT transporter (TC 2.A.15) family. CaiT subfamily.</text>
</comment>
<proteinExistence type="evidence at protein level"/>
<reference key="1">
    <citation type="journal article" date="1994" name="Mol. Microbiol.">
        <title>Molecular characterization of the cai operon necessary for carnitine metabolism in Escherichia coli.</title>
        <authorList>
            <person name="Eichler K."/>
            <person name="Bourgis F."/>
            <person name="Buchet A."/>
            <person name="Kleber H.-P."/>
            <person name="Mandrand-Berthelot M.-A."/>
        </authorList>
    </citation>
    <scope>NUCLEOTIDE SEQUENCE [GENOMIC DNA]</scope>
    <source>
        <strain>O44:K74</strain>
    </source>
</reference>
<reference key="2">
    <citation type="journal article" date="1992" name="Nucleic Acids Res.">
        <title>Systematic sequencing of the Escherichia coli genome: analysis of the 0-2.4 min region.</title>
        <authorList>
            <person name="Yura T."/>
            <person name="Mori H."/>
            <person name="Nagai H."/>
            <person name="Nagata T."/>
            <person name="Ishihama A."/>
            <person name="Fujita N."/>
            <person name="Isono K."/>
            <person name="Mizobuchi K."/>
            <person name="Nakata A."/>
        </authorList>
    </citation>
    <scope>NUCLEOTIDE SEQUENCE [LARGE SCALE GENOMIC DNA]</scope>
    <source>
        <strain>K12</strain>
    </source>
</reference>
<reference key="3">
    <citation type="journal article" date="1997" name="Science">
        <title>The complete genome sequence of Escherichia coli K-12.</title>
        <authorList>
            <person name="Blattner F.R."/>
            <person name="Plunkett G. III"/>
            <person name="Bloch C.A."/>
            <person name="Perna N.T."/>
            <person name="Burland V."/>
            <person name="Riley M."/>
            <person name="Collado-Vides J."/>
            <person name="Glasner J.D."/>
            <person name="Rode C.K."/>
            <person name="Mayhew G.F."/>
            <person name="Gregor J."/>
            <person name="Davis N.W."/>
            <person name="Kirkpatrick H.A."/>
            <person name="Goeden M.A."/>
            <person name="Rose D.J."/>
            <person name="Mau B."/>
            <person name="Shao Y."/>
        </authorList>
    </citation>
    <scope>NUCLEOTIDE SEQUENCE [LARGE SCALE GENOMIC DNA]</scope>
    <source>
        <strain>K12 / MG1655 / ATCC 47076</strain>
    </source>
</reference>
<reference key="4">
    <citation type="journal article" date="2006" name="Mol. Syst. Biol.">
        <title>Highly accurate genome sequences of Escherichia coli K-12 strains MG1655 and W3110.</title>
        <authorList>
            <person name="Hayashi K."/>
            <person name="Morooka N."/>
            <person name="Yamamoto Y."/>
            <person name="Fujita K."/>
            <person name="Isono K."/>
            <person name="Choi S."/>
            <person name="Ohtsubo E."/>
            <person name="Baba T."/>
            <person name="Wanner B.L."/>
            <person name="Mori H."/>
            <person name="Horiuchi T."/>
        </authorList>
    </citation>
    <scope>NUCLEOTIDE SEQUENCE [LARGE SCALE GENOMIC DNA]</scope>
    <scope>SEQUENCE REVISION TO 203</scope>
    <source>
        <strain>K12 / W3110 / ATCC 27325 / DSM 5911</strain>
    </source>
</reference>
<reference key="5">
    <citation type="journal article" date="2002" name="J. Biol. Chem.">
        <title>CaiT of Escherichia coli, a new transporter catalyzing L-carnitine/gamma-butyrobetaine exchange.</title>
        <authorList>
            <person name="Jung H."/>
            <person name="Buchholz M."/>
            <person name="Clausen J."/>
            <person name="Nietschke M."/>
            <person name="Revermann A."/>
            <person name="Schmid R."/>
            <person name="Jung K."/>
        </authorList>
    </citation>
    <scope>PROTEIN SEQUENCE OF 1-12</scope>
    <scope>FUNCTION</scope>
    <scope>CATALYTIC ACTIVITY</scope>
    <scope>ACTIVITY REGULATION</scope>
    <scope>BIOPHYSICOCHEMICAL PROPERTIES</scope>
    <scope>DISRUPTION PHENOTYPE</scope>
</reference>
<reference key="6">
    <citation type="journal article" date="2003" name="J. Mol. Evol.">
        <title>Rates of DNA sequence evolution in experimental populations of Escherichia coli during 20,000 generations.</title>
        <authorList>
            <person name="Lenski R.E."/>
            <person name="Winkworth C.L."/>
            <person name="Riley M.A."/>
        </authorList>
    </citation>
    <scope>NUCLEOTIDE SEQUENCE [GENOMIC DNA] OF 233-428</scope>
    <source>
        <strain>B</strain>
    </source>
</reference>
<reference key="7">
    <citation type="journal article" date="2005" name="Science">
        <title>Global topology analysis of the Escherichia coli inner membrane proteome.</title>
        <authorList>
            <person name="Daley D.O."/>
            <person name="Rapp M."/>
            <person name="Granseth E."/>
            <person name="Melen K."/>
            <person name="Drew D."/>
            <person name="von Heijne G."/>
        </authorList>
    </citation>
    <scope>SUBCELLULAR LOCATION</scope>
    <source>
        <strain>K12 / MG1655 / ATCC 47076</strain>
    </source>
</reference>
<reference key="8">
    <citation type="journal article" date="2006" name="J. Biol. Chem.">
        <title>Oligomeric structure of the carnitine transporter CaiT from Escherichia coli.</title>
        <authorList>
            <person name="Vinothkumar K.R."/>
            <person name="Raunser S."/>
            <person name="Jung H."/>
            <person name="Kuehlbrandt W."/>
        </authorList>
    </citation>
    <scope>SUBUNIT</scope>
</reference>
<reference key="9">
    <citation type="journal article" date="2012" name="J. Biol. Chem.">
        <title>A conformational switch in a partially unwound helix selectively determines the pathway for substrate release from the carnitine/gamma-butyrobetaine antiporter CaiT.</title>
        <authorList>
            <person name="Zomot E."/>
            <person name="Bahar I."/>
        </authorList>
    </citation>
    <scope>DOMAIN</scope>
    <scope>MOLECULAR DYNAMICS SIMULATIONS</scope>
</reference>
<reference key="10">
    <citation type="journal article" date="2019" name="Sci. Rep.">
        <title>Comparison of the functional properties of trimeric and monomeric CaiT of Escherichia coli.</title>
        <authorList>
            <person name="Bracher S."/>
            <person name="Hilger D."/>
            <person name="Guerin K."/>
            <person name="Polyhach Y."/>
            <person name="Jeschke G."/>
            <person name="Krafczyk R."/>
            <person name="Giacomelli G."/>
            <person name="Jung H."/>
        </authorList>
    </citation>
    <scope>FUNCTION</scope>
    <scope>CATALYTIC ACTIVITY</scope>
    <scope>BIOPHYSICOCHEMICAL PROPERTIES</scope>
    <scope>SUBUNIT</scope>
    <scope>MUTAGENESIS OF ASP-288; MET-295; ARG-299 AND THR-304</scope>
</reference>
<reference evidence="14" key="11">
    <citation type="journal article" date="2010" name="Nature">
        <title>Structural basis of Na(+)-independent and cooperative substrate/product antiport in CaiT.</title>
        <authorList>
            <person name="Schulze S."/>
            <person name="Koster S."/>
            <person name="Geldmacher U."/>
            <person name="Terwisscha van Scheltinga A.C."/>
            <person name="Kuhlbrandt W."/>
        </authorList>
    </citation>
    <scope>X-RAY CRYSTALLOGRAPHY (3.50 ANGSTROMS) IN COMPLEX WITH GAMMA-BUTYROBETAINE</scope>
    <scope>FUNCTION</scope>
    <scope>CATALYTIC ACTIVITY</scope>
    <scope>BIOPHYSICOCHEMICAL PROPERTIES</scope>
    <scope>SUBUNIT</scope>
    <scope>SUBCELLULAR LOCATION</scope>
    <scope>TOPOLOGY</scope>
    <scope>DOMAIN</scope>
</reference>
<reference evidence="15" key="12">
    <citation type="journal article" date="2010" name="Nat. Struct. Mol. Biol.">
        <title>Crystal structure of the carnitine transporter and insights into the antiport mechanism.</title>
        <authorList>
            <person name="Tang L."/>
            <person name="Bai L."/>
            <person name="Wang W.H."/>
            <person name="Jiang T."/>
        </authorList>
    </citation>
    <scope>X-RAY CRYSTALLOGRAPHY (3.15 ANGSTROMS) IN COMPLEX WITH CARNITINE</scope>
    <scope>SUBUNIT</scope>
    <scope>SUBCELLULAR LOCATION</scope>
    <scope>TOPOLOGY</scope>
    <scope>DOMAIN</scope>
    <scope>MUTAGENESIS OF TYR-114; TRP-316; TRP-323; TRP-324; TYR-327 AND GLN-330</scope>
</reference>
<feature type="chain" id="PRO_0000201486" description="L-carnitine/gamma-butyrobetaine antiporter">
    <location>
        <begin position="1"/>
        <end position="504"/>
    </location>
</feature>
<feature type="topological domain" description="Cytoplasmic" evidence="5 15">
    <location>
        <begin position="1"/>
        <end position="12"/>
    </location>
</feature>
<feature type="transmembrane region" description="Helical" evidence="5 15">
    <location>
        <begin position="13"/>
        <end position="30"/>
    </location>
</feature>
<feature type="topological domain" description="Periplasmic" evidence="5 15">
    <location>
        <begin position="31"/>
        <end position="51"/>
    </location>
</feature>
<feature type="transmembrane region" description="Helical" evidence="5 15">
    <location>
        <begin position="52"/>
        <end position="67"/>
    </location>
</feature>
<feature type="topological domain" description="Cytoplasmic" evidence="5 15">
    <location>
        <begin position="68"/>
        <end position="90"/>
    </location>
</feature>
<feature type="transmembrane region" description="Helical" evidence="5 15">
    <location>
        <begin position="91"/>
        <end position="98"/>
    </location>
</feature>
<feature type="topological domain" description="Periplasmic" evidence="5 15">
    <location>
        <begin position="99"/>
        <end position="131"/>
    </location>
</feature>
<feature type="transmembrane region" description="Helical" evidence="5 15">
    <location>
        <begin position="132"/>
        <end position="151"/>
    </location>
</feature>
<feature type="topological domain" description="Cytoplasmic" evidence="5 15">
    <location>
        <begin position="152"/>
        <end position="186"/>
    </location>
</feature>
<feature type="transmembrane region" description="Helical" evidence="5 15">
    <location>
        <begin position="187"/>
        <end position="219"/>
    </location>
</feature>
<feature type="topological domain" description="Periplasmic" evidence="5 15">
    <location>
        <begin position="220"/>
        <end position="230"/>
    </location>
</feature>
<feature type="transmembrane region" description="Helical" evidence="5 15">
    <location>
        <begin position="231"/>
        <end position="248"/>
    </location>
</feature>
<feature type="topological domain" description="Cytoplasmic" evidence="5 15">
    <location>
        <begin position="249"/>
        <end position="253"/>
    </location>
</feature>
<feature type="transmembrane region" description="Helical" evidence="5 15">
    <location>
        <begin position="254"/>
        <end position="277"/>
    </location>
</feature>
<feature type="topological domain" description="Periplasmic" evidence="5 15">
    <location>
        <begin position="278"/>
        <end position="311"/>
    </location>
</feature>
<feature type="transmembrane region" description="Helical" evidence="5 15">
    <location>
        <begin position="312"/>
        <end position="335"/>
    </location>
</feature>
<feature type="topological domain" description="Cytoplasmic" evidence="5 15">
    <location>
        <begin position="336"/>
        <end position="349"/>
    </location>
</feature>
<feature type="transmembrane region" description="Helical" evidence="5 15">
    <location>
        <begin position="350"/>
        <end position="372"/>
    </location>
</feature>
<feature type="topological domain" description="Periplasmic" evidence="5 15">
    <location>
        <begin position="373"/>
        <end position="403"/>
    </location>
</feature>
<feature type="transmembrane region" description="Helical" evidence="5 15">
    <location>
        <begin position="404"/>
        <end position="431"/>
    </location>
</feature>
<feature type="topological domain" description="Cytoplasmic" evidence="5 15">
    <location>
        <begin position="432"/>
        <end position="446"/>
    </location>
</feature>
<feature type="transmembrane region" description="Helical" evidence="5 15">
    <location>
        <begin position="447"/>
        <end position="466"/>
    </location>
</feature>
<feature type="topological domain" description="Periplasmic" evidence="5 15">
    <location>
        <begin position="467"/>
        <end position="468"/>
    </location>
</feature>
<feature type="transmembrane region" description="Helical" evidence="5 15">
    <location>
        <begin position="469"/>
        <end position="490"/>
    </location>
</feature>
<feature type="topological domain" description="Cytoplasmic" evidence="5 15">
    <location>
        <begin position="491"/>
        <end position="504"/>
    </location>
</feature>
<feature type="binding site" evidence="6 14">
    <location>
        <position position="114"/>
    </location>
    <ligand>
        <name>4-(trimethylamino)butanoate</name>
        <dbReference type="ChEBI" id="CHEBI:16244"/>
        <label>1</label>
    </ligand>
</feature>
<feature type="binding site" evidence="5 15">
    <location>
        <position position="142"/>
    </location>
    <ligand>
        <name>(R)-carnitine</name>
        <dbReference type="ChEBI" id="CHEBI:16347"/>
        <label>1</label>
    </ligand>
</feature>
<feature type="binding site" evidence="6 14">
    <location>
        <begin position="315"/>
        <end position="316"/>
    </location>
    <ligand>
        <name>4-(trimethylamino)butanoate</name>
        <dbReference type="ChEBI" id="CHEBI:16244"/>
        <label>1</label>
    </ligand>
</feature>
<feature type="binding site" evidence="5 15">
    <location>
        <begin position="323"/>
        <end position="324"/>
    </location>
    <ligand>
        <name>(R)-carnitine</name>
        <dbReference type="ChEBI" id="CHEBI:16347"/>
        <label>1</label>
    </ligand>
</feature>
<feature type="binding site" evidence="6 14">
    <location>
        <position position="323"/>
    </location>
    <ligand>
        <name>4-(trimethylamino)butanoate</name>
        <dbReference type="ChEBI" id="CHEBI:16244"/>
        <label>2</label>
    </ligand>
</feature>
<feature type="binding site" evidence="5 15">
    <location>
        <begin position="327"/>
        <end position="330"/>
    </location>
    <ligand>
        <name>(R)-carnitine</name>
        <dbReference type="ChEBI" id="CHEBI:16347"/>
        <label>2</label>
    </ligand>
</feature>
<feature type="binding site" evidence="6 14">
    <location>
        <position position="331"/>
    </location>
    <ligand>
        <name>4-(trimethylamino)butanoate</name>
        <dbReference type="ChEBI" id="CHEBI:16244"/>
        <label>2</label>
    </ligand>
</feature>
<feature type="sequence variant" description="In strain: O44:K74.">
    <original>L</original>
    <variation>M</variation>
    <location>
        <position position="353"/>
    </location>
</feature>
<feature type="sequence variant" description="In strain: B.">
    <original>I</original>
    <variation>M</variation>
    <location>
        <position position="374"/>
    </location>
</feature>
<feature type="mutagenesis site" description="Small decrease in transport activity." evidence="5">
    <original>Y</original>
    <variation>L</variation>
    <location>
        <position position="114"/>
    </location>
</feature>
<feature type="mutagenesis site" description="Retains 70% of transport activity. Forms mostly monomers." evidence="8">
    <original>D</original>
    <variation>A</variation>
    <location>
        <position position="288"/>
    </location>
</feature>
<feature type="mutagenesis site" description="Abolishes transport activity. Forms mostly monomers." evidence="8">
    <original>D</original>
    <variation>R</variation>
    <location>
        <position position="288"/>
    </location>
</feature>
<feature type="mutagenesis site" description="Retains 4% of transport activity. Forms mostly monomers." evidence="8">
    <original>D</original>
    <variation>W</variation>
    <location>
        <position position="288"/>
    </location>
</feature>
<feature type="mutagenesis site" description="Does not affect transport activity. Forms mostly monomers. Can also form small amounts of homodimers and homotrimers." evidence="8">
    <original>M</original>
    <variation>E</variation>
    <location>
        <position position="295"/>
    </location>
</feature>
<feature type="mutagenesis site" description="Does not affect transport activity. Forms mostly monomers. Can also form small amounts of homodimers and homotrimers. Shows a high tendency to aggregate." evidence="8">
    <original>R</original>
    <variation>A</variation>
    <location>
        <position position="299"/>
    </location>
</feature>
<feature type="mutagenesis site" description="Does not affect transport activity. Forms mostly monomers. Shows a high tendency to aggregate." evidence="8">
    <original>T</original>
    <variation>A</variation>
    <location>
        <position position="304"/>
    </location>
</feature>
<feature type="mutagenesis site" description="Decrease in transport activity." evidence="5">
    <original>W</original>
    <variation>L</variation>
    <location>
        <position position="316"/>
    </location>
</feature>
<feature type="mutagenesis site" description="Abolishes transport activity." evidence="5">
    <original>W</original>
    <variation>L</variation>
    <location>
        <position position="323"/>
    </location>
</feature>
<feature type="mutagenesis site" description="Abolishes transport activity." evidence="5">
    <original>W</original>
    <variation>L</variation>
    <location>
        <position position="324"/>
    </location>
</feature>
<feature type="mutagenesis site" description="Strong decrease in transport activity." evidence="5">
    <original>Y</original>
    <variation>L</variation>
    <location>
        <position position="327"/>
    </location>
</feature>
<feature type="mutagenesis site" description="Decrease in transport activity." evidence="5">
    <original>Q</original>
    <variation>L</variation>
    <location>
        <position position="330"/>
    </location>
</feature>
<feature type="turn" evidence="17">
    <location>
        <begin position="13"/>
        <end position="15"/>
    </location>
</feature>
<feature type="helix" evidence="17">
    <location>
        <begin position="16"/>
        <end position="27"/>
    </location>
</feature>
<feature type="turn" evidence="17">
    <location>
        <begin position="28"/>
        <end position="31"/>
    </location>
</feature>
<feature type="helix" evidence="17">
    <location>
        <begin position="33"/>
        <end position="71"/>
    </location>
</feature>
<feature type="strand" evidence="17">
    <location>
        <begin position="72"/>
        <end position="74"/>
    </location>
</feature>
<feature type="strand" evidence="17">
    <location>
        <begin position="79"/>
        <end position="82"/>
    </location>
</feature>
<feature type="helix" evidence="17">
    <location>
        <begin position="88"/>
        <end position="96"/>
    </location>
</feature>
<feature type="helix" evidence="17">
    <location>
        <begin position="103"/>
        <end position="117"/>
    </location>
</feature>
<feature type="strand" evidence="16">
    <location>
        <begin position="120"/>
        <end position="122"/>
    </location>
</feature>
<feature type="helix" evidence="17">
    <location>
        <begin position="128"/>
        <end position="141"/>
    </location>
</feature>
<feature type="helix" evidence="17">
    <location>
        <begin position="144"/>
        <end position="162"/>
    </location>
</feature>
<feature type="helix" evidence="17">
    <location>
        <begin position="172"/>
        <end position="175"/>
    </location>
</feature>
<feature type="turn" evidence="17">
    <location>
        <begin position="177"/>
        <end position="179"/>
    </location>
</feature>
<feature type="helix" evidence="17">
    <location>
        <begin position="188"/>
        <end position="219"/>
    </location>
</feature>
<feature type="helix" evidence="17">
    <location>
        <begin position="229"/>
        <end position="247"/>
    </location>
</feature>
<feature type="turn" evidence="16">
    <location>
        <begin position="249"/>
        <end position="251"/>
    </location>
</feature>
<feature type="helix" evidence="17">
    <location>
        <begin position="255"/>
        <end position="301"/>
    </location>
</feature>
<feature type="turn" evidence="16">
    <location>
        <begin position="306"/>
        <end position="308"/>
    </location>
</feature>
<feature type="helix" evidence="17">
    <location>
        <begin position="312"/>
        <end position="315"/>
    </location>
</feature>
<feature type="helix" evidence="17">
    <location>
        <begin position="317"/>
        <end position="326"/>
    </location>
</feature>
<feature type="helix" evidence="17">
    <location>
        <begin position="328"/>
        <end position="337"/>
    </location>
</feature>
<feature type="turn" evidence="16">
    <location>
        <begin position="339"/>
        <end position="341"/>
    </location>
</feature>
<feature type="helix" evidence="17">
    <location>
        <begin position="344"/>
        <end position="375"/>
    </location>
</feature>
<feature type="helix" evidence="17">
    <location>
        <begin position="382"/>
        <end position="385"/>
    </location>
</feature>
<feature type="helix" evidence="17">
    <location>
        <begin position="386"/>
        <end position="388"/>
    </location>
</feature>
<feature type="helix" evidence="17">
    <location>
        <begin position="390"/>
        <end position="399"/>
    </location>
</feature>
<feature type="strand" evidence="17">
    <location>
        <begin position="401"/>
        <end position="403"/>
    </location>
</feature>
<feature type="helix" evidence="17">
    <location>
        <begin position="406"/>
        <end position="432"/>
    </location>
</feature>
<feature type="strand" evidence="17">
    <location>
        <begin position="437"/>
        <end position="441"/>
    </location>
</feature>
<feature type="helix" evidence="17">
    <location>
        <begin position="447"/>
        <end position="466"/>
    </location>
</feature>
<feature type="helix" evidence="17">
    <location>
        <begin position="470"/>
        <end position="500"/>
    </location>
</feature>
<keyword id="KW-0002">3D-structure</keyword>
<keyword id="KW-0050">Antiport</keyword>
<keyword id="KW-0997">Cell inner membrane</keyword>
<keyword id="KW-1003">Cell membrane</keyword>
<keyword id="KW-0903">Direct protein sequencing</keyword>
<keyword id="KW-0472">Membrane</keyword>
<keyword id="KW-1185">Reference proteome</keyword>
<keyword id="KW-0812">Transmembrane</keyword>
<keyword id="KW-1133">Transmembrane helix</keyword>
<keyword id="KW-0813">Transport</keyword>
<protein>
    <recommendedName>
        <fullName evidence="1 9">L-carnitine/gamma-butyrobetaine antiporter</fullName>
    </recommendedName>
</protein>
<name>CAIT_ECOLI</name>
<organism>
    <name type="scientific">Escherichia coli (strain K12)</name>
    <dbReference type="NCBI Taxonomy" id="83333"/>
    <lineage>
        <taxon>Bacteria</taxon>
        <taxon>Pseudomonadati</taxon>
        <taxon>Pseudomonadota</taxon>
        <taxon>Gammaproteobacteria</taxon>
        <taxon>Enterobacterales</taxon>
        <taxon>Enterobacteriaceae</taxon>
        <taxon>Escherichia</taxon>
    </lineage>
</organism>
<dbReference type="EMBL" id="X73904">
    <property type="protein sequence ID" value="CAA52110.1"/>
    <property type="molecule type" value="Genomic_DNA"/>
</dbReference>
<dbReference type="EMBL" id="U00096">
    <property type="protein sequence ID" value="AAC73151.1"/>
    <property type="molecule type" value="Genomic_DNA"/>
</dbReference>
<dbReference type="EMBL" id="AP009048">
    <property type="protein sequence ID" value="BAB96609.2"/>
    <property type="molecule type" value="Genomic_DNA"/>
</dbReference>
<dbReference type="EMBL" id="AY625104">
    <property type="protein sequence ID" value="AAT42458.1"/>
    <property type="molecule type" value="Genomic_DNA"/>
</dbReference>
<dbReference type="PIR" id="H64724">
    <property type="entry name" value="H64724"/>
</dbReference>
<dbReference type="RefSeq" id="NP_414582.1">
    <property type="nucleotide sequence ID" value="NC_000913.3"/>
</dbReference>
<dbReference type="RefSeq" id="WP_000787103.1">
    <property type="nucleotide sequence ID" value="NZ_STEB01000010.1"/>
</dbReference>
<dbReference type="PDB" id="2WSX">
    <property type="method" value="X-ray"/>
    <property type="resolution" value="3.50 A"/>
    <property type="chains" value="A/B/C=1-504"/>
</dbReference>
<dbReference type="PDB" id="3HFX">
    <property type="method" value="X-ray"/>
    <property type="resolution" value="3.15 A"/>
    <property type="chains" value="A=1-504"/>
</dbReference>
<dbReference type="PDBsum" id="2WSX"/>
<dbReference type="PDBsum" id="3HFX"/>
<dbReference type="SMR" id="P31553"/>
<dbReference type="BioGRID" id="4260766">
    <property type="interactions" value="345"/>
</dbReference>
<dbReference type="DIP" id="DIP-9247N"/>
<dbReference type="FunCoup" id="P31553">
    <property type="interactions" value="72"/>
</dbReference>
<dbReference type="STRING" id="511145.b0040"/>
<dbReference type="TCDB" id="2.A.15.2.1">
    <property type="family name" value="the betaine/carnitine/choline transporter (bcct) family"/>
</dbReference>
<dbReference type="PaxDb" id="511145-b0040"/>
<dbReference type="EnsemblBacteria" id="AAC73151">
    <property type="protein sequence ID" value="AAC73151"/>
    <property type="gene ID" value="b0040"/>
</dbReference>
<dbReference type="GeneID" id="93777395"/>
<dbReference type="GeneID" id="944765"/>
<dbReference type="KEGG" id="ecj:JW0039"/>
<dbReference type="KEGG" id="eco:b0040"/>
<dbReference type="KEGG" id="ecoc:C3026_00210"/>
<dbReference type="PATRIC" id="fig|1411691.4.peg.2243"/>
<dbReference type="EchoBASE" id="EB1522"/>
<dbReference type="eggNOG" id="COG1292">
    <property type="taxonomic scope" value="Bacteria"/>
</dbReference>
<dbReference type="HOGENOM" id="CLU_010118_6_0_6"/>
<dbReference type="InParanoid" id="P31553"/>
<dbReference type="OMA" id="FYWAWAL"/>
<dbReference type="OrthoDB" id="9775735at2"/>
<dbReference type="PhylomeDB" id="P31553"/>
<dbReference type="BioCyc" id="EcoCyc:CAIT-MONOMER"/>
<dbReference type="BioCyc" id="MetaCyc:CAIT-MONOMER"/>
<dbReference type="UniPathway" id="UPA00117"/>
<dbReference type="EvolutionaryTrace" id="P31553"/>
<dbReference type="PRO" id="PR:P31553"/>
<dbReference type="Proteomes" id="UP000000625">
    <property type="component" value="Chromosome"/>
</dbReference>
<dbReference type="GO" id="GO:0005886">
    <property type="term" value="C:plasma membrane"/>
    <property type="evidence" value="ECO:0000314"/>
    <property type="project" value="EcoCyc"/>
</dbReference>
<dbReference type="GO" id="GO:0044667">
    <property type="term" value="F:(R)-carnitine:4-(trimethylammonio)butanoate antiporter activity"/>
    <property type="evidence" value="ECO:0007669"/>
    <property type="project" value="UniProtKB-UniRule"/>
</dbReference>
<dbReference type="GO" id="GO:0015226">
    <property type="term" value="F:carnitine transmembrane transporter activity"/>
    <property type="evidence" value="ECO:0000314"/>
    <property type="project" value="EcoCyc"/>
</dbReference>
<dbReference type="GO" id="GO:0022857">
    <property type="term" value="F:transmembrane transporter activity"/>
    <property type="evidence" value="ECO:0000318"/>
    <property type="project" value="GO_Central"/>
</dbReference>
<dbReference type="GO" id="GO:1900751">
    <property type="term" value="P:4-(trimethylammonio)butanoate transport"/>
    <property type="evidence" value="ECO:0007669"/>
    <property type="project" value="InterPro"/>
</dbReference>
<dbReference type="GO" id="GO:0009437">
    <property type="term" value="P:carnitine metabolic process"/>
    <property type="evidence" value="ECO:0007669"/>
    <property type="project" value="UniProtKB-UniRule"/>
</dbReference>
<dbReference type="GO" id="GO:0015879">
    <property type="term" value="P:carnitine transport"/>
    <property type="evidence" value="ECO:0000314"/>
    <property type="project" value="EcoCyc"/>
</dbReference>
<dbReference type="HAMAP" id="MF_01049">
    <property type="entry name" value="CaiT"/>
    <property type="match status" value="1"/>
</dbReference>
<dbReference type="InterPro" id="IPR018093">
    <property type="entry name" value="BCCT_CS"/>
</dbReference>
<dbReference type="InterPro" id="IPR000060">
    <property type="entry name" value="BCCT_transptr"/>
</dbReference>
<dbReference type="InterPro" id="IPR023449">
    <property type="entry name" value="BCCT_transptr_CaiT"/>
</dbReference>
<dbReference type="NCBIfam" id="TIGR00842">
    <property type="entry name" value="bcct"/>
    <property type="match status" value="1"/>
</dbReference>
<dbReference type="NCBIfam" id="NF002887">
    <property type="entry name" value="PRK03356.1"/>
    <property type="match status" value="1"/>
</dbReference>
<dbReference type="PANTHER" id="PTHR30047">
    <property type="entry name" value="HIGH-AFFINITY CHOLINE TRANSPORT PROTEIN-RELATED"/>
    <property type="match status" value="1"/>
</dbReference>
<dbReference type="PANTHER" id="PTHR30047:SF11">
    <property type="entry name" value="L-CARNITINE_GAMMA-BUTYROBETAINE ANTIPORTER"/>
    <property type="match status" value="1"/>
</dbReference>
<dbReference type="Pfam" id="PF02028">
    <property type="entry name" value="BCCT"/>
    <property type="match status" value="1"/>
</dbReference>
<dbReference type="PROSITE" id="PS01303">
    <property type="entry name" value="BCCT"/>
    <property type="match status" value="1"/>
</dbReference>
<gene>
    <name evidence="1 10" type="primary">caiT</name>
    <name type="synonym">yaaP</name>
    <name type="ordered locus">b0040</name>
    <name type="ordered locus">JW0039</name>
</gene>